<organism>
    <name type="scientific">Trichlorobacter lovleyi (strain ATCC BAA-1151 / DSM 17278 / SZ)</name>
    <name type="common">Geobacter lovleyi</name>
    <dbReference type="NCBI Taxonomy" id="398767"/>
    <lineage>
        <taxon>Bacteria</taxon>
        <taxon>Pseudomonadati</taxon>
        <taxon>Thermodesulfobacteriota</taxon>
        <taxon>Desulfuromonadia</taxon>
        <taxon>Geobacterales</taxon>
        <taxon>Geobacteraceae</taxon>
        <taxon>Trichlorobacter</taxon>
    </lineage>
</organism>
<proteinExistence type="inferred from homology"/>
<gene>
    <name evidence="1" type="primary">pyrB</name>
    <name type="ordered locus">Glov_2085</name>
</gene>
<reference key="1">
    <citation type="submission" date="2008-05" db="EMBL/GenBank/DDBJ databases">
        <title>Complete sequence of chromosome of Geobacter lovleyi SZ.</title>
        <authorList>
            <consortium name="US DOE Joint Genome Institute"/>
            <person name="Lucas S."/>
            <person name="Copeland A."/>
            <person name="Lapidus A."/>
            <person name="Glavina del Rio T."/>
            <person name="Dalin E."/>
            <person name="Tice H."/>
            <person name="Bruce D."/>
            <person name="Goodwin L."/>
            <person name="Pitluck S."/>
            <person name="Chertkov O."/>
            <person name="Meincke L."/>
            <person name="Brettin T."/>
            <person name="Detter J.C."/>
            <person name="Han C."/>
            <person name="Tapia R."/>
            <person name="Kuske C.R."/>
            <person name="Schmutz J."/>
            <person name="Larimer F."/>
            <person name="Land M."/>
            <person name="Hauser L."/>
            <person name="Kyrpides N."/>
            <person name="Mikhailova N."/>
            <person name="Sung Y."/>
            <person name="Fletcher K.E."/>
            <person name="Ritalahti K.M."/>
            <person name="Loeffler F.E."/>
            <person name="Richardson P."/>
        </authorList>
    </citation>
    <scope>NUCLEOTIDE SEQUENCE [LARGE SCALE GENOMIC DNA]</scope>
    <source>
        <strain>ATCC BAA-1151 / DSM 17278 / SZ</strain>
    </source>
</reference>
<evidence type="ECO:0000255" key="1">
    <source>
        <dbReference type="HAMAP-Rule" id="MF_00001"/>
    </source>
</evidence>
<accession>B3E3I2</accession>
<dbReference type="EC" id="2.1.3.2" evidence="1"/>
<dbReference type="EMBL" id="CP001089">
    <property type="protein sequence ID" value="ACD95801.1"/>
    <property type="molecule type" value="Genomic_DNA"/>
</dbReference>
<dbReference type="RefSeq" id="WP_012470140.1">
    <property type="nucleotide sequence ID" value="NC_010814.1"/>
</dbReference>
<dbReference type="SMR" id="B3E3I2"/>
<dbReference type="STRING" id="398767.Glov_2085"/>
<dbReference type="KEGG" id="glo:Glov_2085"/>
<dbReference type="eggNOG" id="COG0540">
    <property type="taxonomic scope" value="Bacteria"/>
</dbReference>
<dbReference type="HOGENOM" id="CLU_043846_2_0_7"/>
<dbReference type="OrthoDB" id="9774690at2"/>
<dbReference type="UniPathway" id="UPA00070">
    <property type="reaction ID" value="UER00116"/>
</dbReference>
<dbReference type="Proteomes" id="UP000002420">
    <property type="component" value="Chromosome"/>
</dbReference>
<dbReference type="GO" id="GO:0005829">
    <property type="term" value="C:cytosol"/>
    <property type="evidence" value="ECO:0007669"/>
    <property type="project" value="TreeGrafter"/>
</dbReference>
<dbReference type="GO" id="GO:0016597">
    <property type="term" value="F:amino acid binding"/>
    <property type="evidence" value="ECO:0007669"/>
    <property type="project" value="InterPro"/>
</dbReference>
<dbReference type="GO" id="GO:0004070">
    <property type="term" value="F:aspartate carbamoyltransferase activity"/>
    <property type="evidence" value="ECO:0007669"/>
    <property type="project" value="UniProtKB-UniRule"/>
</dbReference>
<dbReference type="GO" id="GO:0006207">
    <property type="term" value="P:'de novo' pyrimidine nucleobase biosynthetic process"/>
    <property type="evidence" value="ECO:0007669"/>
    <property type="project" value="InterPro"/>
</dbReference>
<dbReference type="GO" id="GO:0044205">
    <property type="term" value="P:'de novo' UMP biosynthetic process"/>
    <property type="evidence" value="ECO:0007669"/>
    <property type="project" value="UniProtKB-UniRule"/>
</dbReference>
<dbReference type="GO" id="GO:0006520">
    <property type="term" value="P:amino acid metabolic process"/>
    <property type="evidence" value="ECO:0007669"/>
    <property type="project" value="InterPro"/>
</dbReference>
<dbReference type="FunFam" id="3.40.50.1370:FF:000007">
    <property type="entry name" value="Aspartate carbamoyltransferase"/>
    <property type="match status" value="1"/>
</dbReference>
<dbReference type="Gene3D" id="3.40.50.1370">
    <property type="entry name" value="Aspartate/ornithine carbamoyltransferase"/>
    <property type="match status" value="2"/>
</dbReference>
<dbReference type="HAMAP" id="MF_00001">
    <property type="entry name" value="Asp_carb_tr"/>
    <property type="match status" value="1"/>
</dbReference>
<dbReference type="InterPro" id="IPR006132">
    <property type="entry name" value="Asp/Orn_carbamoyltranf_P-bd"/>
</dbReference>
<dbReference type="InterPro" id="IPR006130">
    <property type="entry name" value="Asp/Orn_carbamoylTrfase"/>
</dbReference>
<dbReference type="InterPro" id="IPR036901">
    <property type="entry name" value="Asp/Orn_carbamoylTrfase_sf"/>
</dbReference>
<dbReference type="InterPro" id="IPR002082">
    <property type="entry name" value="Asp_carbamoyltransf"/>
</dbReference>
<dbReference type="InterPro" id="IPR006131">
    <property type="entry name" value="Asp_carbamoyltransf_Asp/Orn-bd"/>
</dbReference>
<dbReference type="NCBIfam" id="TIGR00670">
    <property type="entry name" value="asp_carb_tr"/>
    <property type="match status" value="1"/>
</dbReference>
<dbReference type="NCBIfam" id="NF002032">
    <property type="entry name" value="PRK00856.1"/>
    <property type="match status" value="1"/>
</dbReference>
<dbReference type="PANTHER" id="PTHR45753:SF6">
    <property type="entry name" value="ASPARTATE CARBAMOYLTRANSFERASE"/>
    <property type="match status" value="1"/>
</dbReference>
<dbReference type="PANTHER" id="PTHR45753">
    <property type="entry name" value="ORNITHINE CARBAMOYLTRANSFERASE, MITOCHONDRIAL"/>
    <property type="match status" value="1"/>
</dbReference>
<dbReference type="Pfam" id="PF00185">
    <property type="entry name" value="OTCace"/>
    <property type="match status" value="1"/>
</dbReference>
<dbReference type="Pfam" id="PF02729">
    <property type="entry name" value="OTCace_N"/>
    <property type="match status" value="1"/>
</dbReference>
<dbReference type="PRINTS" id="PR00100">
    <property type="entry name" value="AOTCASE"/>
</dbReference>
<dbReference type="PRINTS" id="PR00101">
    <property type="entry name" value="ATCASE"/>
</dbReference>
<dbReference type="SUPFAM" id="SSF53671">
    <property type="entry name" value="Aspartate/ornithine carbamoyltransferase"/>
    <property type="match status" value="1"/>
</dbReference>
<dbReference type="PROSITE" id="PS00097">
    <property type="entry name" value="CARBAMOYLTRANSFERASE"/>
    <property type="match status" value="1"/>
</dbReference>
<protein>
    <recommendedName>
        <fullName evidence="1">Aspartate carbamoyltransferase catalytic subunit</fullName>
        <ecNumber evidence="1">2.1.3.2</ecNumber>
    </recommendedName>
    <alternativeName>
        <fullName evidence="1">Aspartate transcarbamylase</fullName>
        <shortName evidence="1">ATCase</shortName>
    </alternativeName>
</protein>
<name>PYRB_TRIL1</name>
<comment type="function">
    <text evidence="1">Catalyzes the condensation of carbamoyl phosphate and aspartate to form carbamoyl aspartate and inorganic phosphate, the committed step in the de novo pyrimidine nucleotide biosynthesis pathway.</text>
</comment>
<comment type="catalytic activity">
    <reaction evidence="1">
        <text>carbamoyl phosphate + L-aspartate = N-carbamoyl-L-aspartate + phosphate + H(+)</text>
        <dbReference type="Rhea" id="RHEA:20013"/>
        <dbReference type="ChEBI" id="CHEBI:15378"/>
        <dbReference type="ChEBI" id="CHEBI:29991"/>
        <dbReference type="ChEBI" id="CHEBI:32814"/>
        <dbReference type="ChEBI" id="CHEBI:43474"/>
        <dbReference type="ChEBI" id="CHEBI:58228"/>
        <dbReference type="EC" id="2.1.3.2"/>
    </reaction>
</comment>
<comment type="pathway">
    <text evidence="1">Pyrimidine metabolism; UMP biosynthesis via de novo pathway; (S)-dihydroorotate from bicarbonate: step 2/3.</text>
</comment>
<comment type="subunit">
    <text evidence="1">Heterododecamer (2C3:3R2) of six catalytic PyrB chains organized as two trimers (C3), and six regulatory PyrI chains organized as three dimers (R2).</text>
</comment>
<comment type="similarity">
    <text evidence="1">Belongs to the aspartate/ornithine carbamoyltransferase superfamily. ATCase family.</text>
</comment>
<feature type="chain" id="PRO_1000088766" description="Aspartate carbamoyltransferase catalytic subunit">
    <location>
        <begin position="1"/>
        <end position="310"/>
    </location>
</feature>
<feature type="binding site" evidence="1">
    <location>
        <position position="58"/>
    </location>
    <ligand>
        <name>carbamoyl phosphate</name>
        <dbReference type="ChEBI" id="CHEBI:58228"/>
    </ligand>
</feature>
<feature type="binding site" evidence="1">
    <location>
        <position position="59"/>
    </location>
    <ligand>
        <name>carbamoyl phosphate</name>
        <dbReference type="ChEBI" id="CHEBI:58228"/>
    </ligand>
</feature>
<feature type="binding site" evidence="1">
    <location>
        <position position="86"/>
    </location>
    <ligand>
        <name>L-aspartate</name>
        <dbReference type="ChEBI" id="CHEBI:29991"/>
    </ligand>
</feature>
<feature type="binding site" evidence="1">
    <location>
        <position position="108"/>
    </location>
    <ligand>
        <name>carbamoyl phosphate</name>
        <dbReference type="ChEBI" id="CHEBI:58228"/>
    </ligand>
</feature>
<feature type="binding site" evidence="1">
    <location>
        <position position="136"/>
    </location>
    <ligand>
        <name>carbamoyl phosphate</name>
        <dbReference type="ChEBI" id="CHEBI:58228"/>
    </ligand>
</feature>
<feature type="binding site" evidence="1">
    <location>
        <position position="139"/>
    </location>
    <ligand>
        <name>carbamoyl phosphate</name>
        <dbReference type="ChEBI" id="CHEBI:58228"/>
    </ligand>
</feature>
<feature type="binding site" evidence="1">
    <location>
        <position position="169"/>
    </location>
    <ligand>
        <name>L-aspartate</name>
        <dbReference type="ChEBI" id="CHEBI:29991"/>
    </ligand>
</feature>
<feature type="binding site" evidence="1">
    <location>
        <position position="224"/>
    </location>
    <ligand>
        <name>L-aspartate</name>
        <dbReference type="ChEBI" id="CHEBI:29991"/>
    </ligand>
</feature>
<feature type="binding site" evidence="1">
    <location>
        <position position="265"/>
    </location>
    <ligand>
        <name>carbamoyl phosphate</name>
        <dbReference type="ChEBI" id="CHEBI:58228"/>
    </ligand>
</feature>
<feature type="binding site" evidence="1">
    <location>
        <position position="266"/>
    </location>
    <ligand>
        <name>carbamoyl phosphate</name>
        <dbReference type="ChEBI" id="CHEBI:58228"/>
    </ligand>
</feature>
<sequence length="310" mass="33994">MEFKHKDIIALRDLSKEEIELLISTAENMREVNSRDIKKVPTLRGKTIINLFYESSTRTRTSFEIAGKRLSADTVNIAPSNSSATKGETLADTALNLLAMKPDIIVMRHAVSGSHYFLSKKVGCSIINAGDGAHEHPSQGLLDMLTIKDKFGRLDGLKVAMVGDITHSRVARSNIQGLTKMGSSIFLAGPPTMMPPGVEQLGNVTVCGTMKEAIQDADVVIMLRIQQERQGKTLMPNTREYSRYFGLNPENVKWAKPDAMVMHPGPINRGVEMSSYVVDGNQSHILKQVENGVAVRMAMLYHVCGGGNVE</sequence>
<keyword id="KW-0665">Pyrimidine biosynthesis</keyword>
<keyword id="KW-1185">Reference proteome</keyword>
<keyword id="KW-0808">Transferase</keyword>